<feature type="chain" id="PRO_0000147204" description="Dihydroorotase">
    <location>
        <begin position="1"/>
        <end position="349"/>
    </location>
</feature>
<feature type="active site" evidence="1">
    <location>
        <position position="252"/>
    </location>
</feature>
<feature type="binding site" evidence="1">
    <location>
        <position position="17"/>
    </location>
    <ligand>
        <name>Zn(2+)</name>
        <dbReference type="ChEBI" id="CHEBI:29105"/>
        <label>1</label>
    </ligand>
</feature>
<feature type="binding site" evidence="1">
    <location>
        <begin position="19"/>
        <end position="21"/>
    </location>
    <ligand>
        <name>substrate</name>
    </ligand>
</feature>
<feature type="binding site" evidence="1">
    <location>
        <position position="19"/>
    </location>
    <ligand>
        <name>Zn(2+)</name>
        <dbReference type="ChEBI" id="CHEBI:29105"/>
        <label>1</label>
    </ligand>
</feature>
<feature type="binding site" evidence="1">
    <location>
        <position position="45"/>
    </location>
    <ligand>
        <name>substrate</name>
    </ligand>
</feature>
<feature type="binding site" description="via carbamate group" evidence="1">
    <location>
        <position position="103"/>
    </location>
    <ligand>
        <name>Zn(2+)</name>
        <dbReference type="ChEBI" id="CHEBI:29105"/>
        <label>1</label>
    </ligand>
</feature>
<feature type="binding site" description="via carbamate group" evidence="1">
    <location>
        <position position="103"/>
    </location>
    <ligand>
        <name>Zn(2+)</name>
        <dbReference type="ChEBI" id="CHEBI:29105"/>
        <label>2</label>
    </ligand>
</feature>
<feature type="binding site" evidence="1">
    <location>
        <position position="140"/>
    </location>
    <ligand>
        <name>substrate</name>
    </ligand>
</feature>
<feature type="binding site" evidence="1">
    <location>
        <position position="140"/>
    </location>
    <ligand>
        <name>Zn(2+)</name>
        <dbReference type="ChEBI" id="CHEBI:29105"/>
        <label>2</label>
    </ligand>
</feature>
<feature type="binding site" evidence="1">
    <location>
        <position position="178"/>
    </location>
    <ligand>
        <name>Zn(2+)</name>
        <dbReference type="ChEBI" id="CHEBI:29105"/>
        <label>2</label>
    </ligand>
</feature>
<feature type="binding site" evidence="1">
    <location>
        <position position="224"/>
    </location>
    <ligand>
        <name>substrate</name>
    </ligand>
</feature>
<feature type="binding site" evidence="1">
    <location>
        <position position="252"/>
    </location>
    <ligand>
        <name>Zn(2+)</name>
        <dbReference type="ChEBI" id="CHEBI:29105"/>
        <label>1</label>
    </ligand>
</feature>
<feature type="binding site" evidence="1">
    <location>
        <position position="256"/>
    </location>
    <ligand>
        <name>substrate</name>
    </ligand>
</feature>
<feature type="binding site" evidence="1">
    <location>
        <position position="268"/>
    </location>
    <ligand>
        <name>substrate</name>
    </ligand>
</feature>
<feature type="modified residue" description="N6-carboxylysine" evidence="1">
    <location>
        <position position="103"/>
    </location>
</feature>
<evidence type="ECO:0000255" key="1">
    <source>
        <dbReference type="HAMAP-Rule" id="MF_00219"/>
    </source>
</evidence>
<sequence>MSKFLKKIKIIKPDDWHVHLRDNEILKKVSQYTGTFYKRAIIMPNLEEPITNCFRSISYRRRILNSMTPNTAFQPLMICYLTEKTSPEELQQGFFKKIFVGAKLYPHCSTTNSKYGIKNINNIYHLFNIMEKIKMPLLIHGEENNLNIDIYDREAKFIENTLKPLRKKFPELKIILEHITTEEAISYIEECNSSYLAGTITPHHLMLNRNNMFIDGIQPHLYCLPLLKRKKHQIALRNVISSGSKNFFLGSDTAPHFHKNKINTFGCAGIFNAPSSLLCYVSVFEEMNALQHFQSFCSENGPNFYNMPINKETITLVKKPHKILEKINIGKNIIVPFLAGKRLDWSIEK</sequence>
<gene>
    <name evidence="1" type="primary">pyrC</name>
    <name type="ordered locus">BUsg_322</name>
</gene>
<protein>
    <recommendedName>
        <fullName evidence="1">Dihydroorotase</fullName>
        <shortName evidence="1">DHOase</shortName>
        <ecNumber evidence="1">3.5.2.3</ecNumber>
    </recommendedName>
</protein>
<keyword id="KW-0378">Hydrolase</keyword>
<keyword id="KW-0479">Metal-binding</keyword>
<keyword id="KW-0665">Pyrimidine biosynthesis</keyword>
<keyword id="KW-0862">Zinc</keyword>
<reference key="1">
    <citation type="journal article" date="2002" name="Science">
        <title>50 million years of genomic stasis in endosymbiotic bacteria.</title>
        <authorList>
            <person name="Tamas I."/>
            <person name="Klasson L."/>
            <person name="Canbaeck B."/>
            <person name="Naeslund A.K."/>
            <person name="Eriksson A.-S."/>
            <person name="Wernegreen J.J."/>
            <person name="Sandstroem J.P."/>
            <person name="Moran N.A."/>
            <person name="Andersson S.G.E."/>
        </authorList>
    </citation>
    <scope>NUCLEOTIDE SEQUENCE [LARGE SCALE GENOMIC DNA]</scope>
    <source>
        <strain>Sg</strain>
    </source>
</reference>
<accession>Q8K9L2</accession>
<proteinExistence type="inferred from homology"/>
<name>PYRC_BUCAP</name>
<comment type="function">
    <text evidence="1">Catalyzes the reversible cyclization of carbamoyl aspartate to dihydroorotate.</text>
</comment>
<comment type="catalytic activity">
    <reaction evidence="1">
        <text>(S)-dihydroorotate + H2O = N-carbamoyl-L-aspartate + H(+)</text>
        <dbReference type="Rhea" id="RHEA:24296"/>
        <dbReference type="ChEBI" id="CHEBI:15377"/>
        <dbReference type="ChEBI" id="CHEBI:15378"/>
        <dbReference type="ChEBI" id="CHEBI:30864"/>
        <dbReference type="ChEBI" id="CHEBI:32814"/>
        <dbReference type="EC" id="3.5.2.3"/>
    </reaction>
</comment>
<comment type="cofactor">
    <cofactor evidence="1">
        <name>Zn(2+)</name>
        <dbReference type="ChEBI" id="CHEBI:29105"/>
    </cofactor>
    <text evidence="1">Binds 2 Zn(2+) ions per subunit.</text>
</comment>
<comment type="pathway">
    <text evidence="1">Pyrimidine metabolism; UMP biosynthesis via de novo pathway; (S)-dihydroorotate from bicarbonate: step 3/3.</text>
</comment>
<comment type="subunit">
    <text evidence="1">Homodimer.</text>
</comment>
<comment type="similarity">
    <text evidence="1">Belongs to the metallo-dependent hydrolases superfamily. DHOase family. Class II DHOase subfamily.</text>
</comment>
<dbReference type="EC" id="3.5.2.3" evidence="1"/>
<dbReference type="EMBL" id="AE013218">
    <property type="protein sequence ID" value="AAM67876.1"/>
    <property type="molecule type" value="Genomic_DNA"/>
</dbReference>
<dbReference type="RefSeq" id="WP_011053843.1">
    <property type="nucleotide sequence ID" value="NC_004061.1"/>
</dbReference>
<dbReference type="SMR" id="Q8K9L2"/>
<dbReference type="STRING" id="198804.BUsg_322"/>
<dbReference type="MEROPS" id="M38.A02"/>
<dbReference type="GeneID" id="93003793"/>
<dbReference type="KEGG" id="bas:BUsg_322"/>
<dbReference type="eggNOG" id="COG0418">
    <property type="taxonomic scope" value="Bacteria"/>
</dbReference>
<dbReference type="HOGENOM" id="CLU_041558_1_0_6"/>
<dbReference type="UniPathway" id="UPA00070">
    <property type="reaction ID" value="UER00117"/>
</dbReference>
<dbReference type="Proteomes" id="UP000000416">
    <property type="component" value="Chromosome"/>
</dbReference>
<dbReference type="GO" id="GO:0005829">
    <property type="term" value="C:cytosol"/>
    <property type="evidence" value="ECO:0007669"/>
    <property type="project" value="TreeGrafter"/>
</dbReference>
<dbReference type="GO" id="GO:0004151">
    <property type="term" value="F:dihydroorotase activity"/>
    <property type="evidence" value="ECO:0007669"/>
    <property type="project" value="UniProtKB-UniRule"/>
</dbReference>
<dbReference type="GO" id="GO:0008270">
    <property type="term" value="F:zinc ion binding"/>
    <property type="evidence" value="ECO:0007669"/>
    <property type="project" value="UniProtKB-UniRule"/>
</dbReference>
<dbReference type="GO" id="GO:0006207">
    <property type="term" value="P:'de novo' pyrimidine nucleobase biosynthetic process"/>
    <property type="evidence" value="ECO:0007669"/>
    <property type="project" value="TreeGrafter"/>
</dbReference>
<dbReference type="GO" id="GO:0044205">
    <property type="term" value="P:'de novo' UMP biosynthetic process"/>
    <property type="evidence" value="ECO:0007669"/>
    <property type="project" value="UniProtKB-UniRule"/>
</dbReference>
<dbReference type="CDD" id="cd01294">
    <property type="entry name" value="DHOase"/>
    <property type="match status" value="1"/>
</dbReference>
<dbReference type="Gene3D" id="3.20.20.140">
    <property type="entry name" value="Metal-dependent hydrolases"/>
    <property type="match status" value="1"/>
</dbReference>
<dbReference type="HAMAP" id="MF_00219">
    <property type="entry name" value="PyrC_classII"/>
    <property type="match status" value="1"/>
</dbReference>
<dbReference type="InterPro" id="IPR006680">
    <property type="entry name" value="Amidohydro-rel"/>
</dbReference>
<dbReference type="InterPro" id="IPR004721">
    <property type="entry name" value="DHOdimr"/>
</dbReference>
<dbReference type="InterPro" id="IPR002195">
    <property type="entry name" value="Dihydroorotase_CS"/>
</dbReference>
<dbReference type="InterPro" id="IPR032466">
    <property type="entry name" value="Metal_Hydrolase"/>
</dbReference>
<dbReference type="NCBIfam" id="TIGR00856">
    <property type="entry name" value="pyrC_dimer"/>
    <property type="match status" value="1"/>
</dbReference>
<dbReference type="PANTHER" id="PTHR43137">
    <property type="entry name" value="DIHYDROOROTASE"/>
    <property type="match status" value="1"/>
</dbReference>
<dbReference type="PANTHER" id="PTHR43137:SF1">
    <property type="entry name" value="DIHYDROOROTASE"/>
    <property type="match status" value="1"/>
</dbReference>
<dbReference type="Pfam" id="PF01979">
    <property type="entry name" value="Amidohydro_1"/>
    <property type="match status" value="1"/>
</dbReference>
<dbReference type="PIRSF" id="PIRSF001237">
    <property type="entry name" value="DHOdimr"/>
    <property type="match status" value="1"/>
</dbReference>
<dbReference type="SUPFAM" id="SSF51556">
    <property type="entry name" value="Metallo-dependent hydrolases"/>
    <property type="match status" value="1"/>
</dbReference>
<dbReference type="PROSITE" id="PS00482">
    <property type="entry name" value="DIHYDROOROTASE_1"/>
    <property type="match status" value="1"/>
</dbReference>
<dbReference type="PROSITE" id="PS00483">
    <property type="entry name" value="DIHYDROOROTASE_2"/>
    <property type="match status" value="1"/>
</dbReference>
<organism>
    <name type="scientific">Buchnera aphidicola subsp. Schizaphis graminum (strain Sg)</name>
    <dbReference type="NCBI Taxonomy" id="198804"/>
    <lineage>
        <taxon>Bacteria</taxon>
        <taxon>Pseudomonadati</taxon>
        <taxon>Pseudomonadota</taxon>
        <taxon>Gammaproteobacteria</taxon>
        <taxon>Enterobacterales</taxon>
        <taxon>Erwiniaceae</taxon>
        <taxon>Buchnera</taxon>
    </lineage>
</organism>